<reference key="1">
    <citation type="journal article" date="2003" name="Mol. Microbiol.">
        <title>An integrated analysis of the genome of the hyperthermophilic archaeon Pyrococcus abyssi.</title>
        <authorList>
            <person name="Cohen G.N."/>
            <person name="Barbe V."/>
            <person name="Flament D."/>
            <person name="Galperin M."/>
            <person name="Heilig R."/>
            <person name="Lecompte O."/>
            <person name="Poch O."/>
            <person name="Prieur D."/>
            <person name="Querellou J."/>
            <person name="Ripp R."/>
            <person name="Thierry J.-C."/>
            <person name="Van der Oost J."/>
            <person name="Weissenbach J."/>
            <person name="Zivanovic Y."/>
            <person name="Forterre P."/>
        </authorList>
    </citation>
    <scope>NUCLEOTIDE SEQUENCE [LARGE SCALE GENOMIC DNA]</scope>
    <source>
        <strain>GE5 / Orsay</strain>
    </source>
</reference>
<reference key="2">
    <citation type="journal article" date="2012" name="Curr. Microbiol.">
        <title>Re-annotation of two hyperthermophilic archaea Pyrococcus abyssi GE5 and Pyrococcus furiosus DSM 3638.</title>
        <authorList>
            <person name="Gao J."/>
            <person name="Wang J."/>
        </authorList>
    </citation>
    <scope>GENOME REANNOTATION</scope>
    <source>
        <strain>GE5 / Orsay</strain>
    </source>
</reference>
<comment type="cofactor">
    <cofactor evidence="1">
        <name>Zn(2+)</name>
        <dbReference type="ChEBI" id="CHEBI:29105"/>
    </cofactor>
    <text evidence="1">Binds 1 zinc ion per subunit.</text>
</comment>
<comment type="subcellular location">
    <subcellularLocation>
        <location evidence="1">Cell membrane</location>
        <topology evidence="1">Multi-pass membrane protein</topology>
    </subcellularLocation>
</comment>
<comment type="similarity">
    <text evidence="1">Belongs to the peptidase M48B family.</text>
</comment>
<dbReference type="EC" id="3.4.24.-" evidence="1"/>
<dbReference type="EMBL" id="AJ248286">
    <property type="protein sequence ID" value="CAB50054.1"/>
    <property type="molecule type" value="Genomic_DNA"/>
</dbReference>
<dbReference type="EMBL" id="HE613800">
    <property type="protein sequence ID" value="CCE70559.1"/>
    <property type="molecule type" value="Genomic_DNA"/>
</dbReference>
<dbReference type="PIR" id="A75094">
    <property type="entry name" value="A75094"/>
</dbReference>
<dbReference type="RefSeq" id="WP_010868260.1">
    <property type="nucleotide sequence ID" value="NC_000868.1"/>
</dbReference>
<dbReference type="SMR" id="Q9UZK3"/>
<dbReference type="STRING" id="272844.PAB0758"/>
<dbReference type="KEGG" id="pab:PAB0758"/>
<dbReference type="PATRIC" id="fig|272844.11.peg.1200"/>
<dbReference type="eggNOG" id="arCOG01331">
    <property type="taxonomic scope" value="Archaea"/>
</dbReference>
<dbReference type="HOGENOM" id="CLU_042266_3_0_2"/>
<dbReference type="OrthoDB" id="28389at2157"/>
<dbReference type="PhylomeDB" id="Q9UZK3"/>
<dbReference type="Proteomes" id="UP000000810">
    <property type="component" value="Chromosome"/>
</dbReference>
<dbReference type="Proteomes" id="UP000009139">
    <property type="component" value="Chromosome"/>
</dbReference>
<dbReference type="GO" id="GO:0005886">
    <property type="term" value="C:plasma membrane"/>
    <property type="evidence" value="ECO:0007669"/>
    <property type="project" value="UniProtKB-SubCell"/>
</dbReference>
<dbReference type="GO" id="GO:0004222">
    <property type="term" value="F:metalloendopeptidase activity"/>
    <property type="evidence" value="ECO:0007669"/>
    <property type="project" value="UniProtKB-UniRule"/>
</dbReference>
<dbReference type="GO" id="GO:0008270">
    <property type="term" value="F:zinc ion binding"/>
    <property type="evidence" value="ECO:0007669"/>
    <property type="project" value="UniProtKB-UniRule"/>
</dbReference>
<dbReference type="GO" id="GO:0006508">
    <property type="term" value="P:proteolysis"/>
    <property type="evidence" value="ECO:0007669"/>
    <property type="project" value="UniProtKB-KW"/>
</dbReference>
<dbReference type="CDD" id="cd07336">
    <property type="entry name" value="M48B_HtpX_like"/>
    <property type="match status" value="1"/>
</dbReference>
<dbReference type="Gene3D" id="3.30.2010.10">
    <property type="entry name" value="Metalloproteases ('zincins'), catalytic domain"/>
    <property type="match status" value="1"/>
</dbReference>
<dbReference type="HAMAP" id="MF_00188">
    <property type="entry name" value="Pept_M48_protease_HtpX"/>
    <property type="match status" value="1"/>
</dbReference>
<dbReference type="InterPro" id="IPR050083">
    <property type="entry name" value="HtpX_protease"/>
</dbReference>
<dbReference type="InterPro" id="IPR022919">
    <property type="entry name" value="Pept_M48_protease_HtpX"/>
</dbReference>
<dbReference type="InterPro" id="IPR001915">
    <property type="entry name" value="Peptidase_M48"/>
</dbReference>
<dbReference type="PANTHER" id="PTHR43221">
    <property type="entry name" value="PROTEASE HTPX"/>
    <property type="match status" value="1"/>
</dbReference>
<dbReference type="PANTHER" id="PTHR43221:SF2">
    <property type="entry name" value="PROTEASE HTPX HOMOLOG"/>
    <property type="match status" value="1"/>
</dbReference>
<dbReference type="Pfam" id="PF01435">
    <property type="entry name" value="Peptidase_M48"/>
    <property type="match status" value="1"/>
</dbReference>
<keyword id="KW-1003">Cell membrane</keyword>
<keyword id="KW-0378">Hydrolase</keyword>
<keyword id="KW-0472">Membrane</keyword>
<keyword id="KW-0479">Metal-binding</keyword>
<keyword id="KW-0482">Metalloprotease</keyword>
<keyword id="KW-0645">Protease</keyword>
<keyword id="KW-0812">Transmembrane</keyword>
<keyword id="KW-1133">Transmembrane helix</keyword>
<keyword id="KW-0862">Zinc</keyword>
<feature type="chain" id="PRO_0000138923" description="Protease HtpX homolog">
    <location>
        <begin position="1"/>
        <end position="289"/>
    </location>
</feature>
<feature type="transmembrane region" description="Helical" evidence="1">
    <location>
        <begin position="9"/>
        <end position="29"/>
    </location>
</feature>
<feature type="transmembrane region" description="Helical" evidence="1">
    <location>
        <begin position="31"/>
        <end position="51"/>
    </location>
</feature>
<feature type="transmembrane region" description="Helical" evidence="1">
    <location>
        <begin position="143"/>
        <end position="163"/>
    </location>
</feature>
<feature type="transmembrane region" description="Helical" evidence="1">
    <location>
        <begin position="182"/>
        <end position="202"/>
    </location>
</feature>
<feature type="active site" evidence="1">
    <location>
        <position position="134"/>
    </location>
</feature>
<feature type="binding site" evidence="1">
    <location>
        <position position="133"/>
    </location>
    <ligand>
        <name>Zn(2+)</name>
        <dbReference type="ChEBI" id="CHEBI:29105"/>
        <note>catalytic</note>
    </ligand>
</feature>
<feature type="binding site" evidence="1">
    <location>
        <position position="137"/>
    </location>
    <ligand>
        <name>Zn(2+)</name>
        <dbReference type="ChEBI" id="CHEBI:29105"/>
        <note>catalytic</note>
    </ligand>
</feature>
<feature type="binding site" evidence="1">
    <location>
        <position position="207"/>
    </location>
    <ligand>
        <name>Zn(2+)</name>
        <dbReference type="ChEBI" id="CHEBI:29105"/>
        <note>catalytic</note>
    </ligand>
</feature>
<protein>
    <recommendedName>
        <fullName evidence="1">Protease HtpX homolog</fullName>
        <ecNumber evidence="1">3.4.24.-</ecNumber>
    </recommendedName>
</protein>
<name>HTPX_PYRAB</name>
<gene>
    <name evidence="1" type="primary">htpX</name>
    <name type="ordered locus">PYRAB11430</name>
    <name type="ORF">PAB0758</name>
</gene>
<organism>
    <name type="scientific">Pyrococcus abyssi (strain GE5 / Orsay)</name>
    <dbReference type="NCBI Taxonomy" id="272844"/>
    <lineage>
        <taxon>Archaea</taxon>
        <taxon>Methanobacteriati</taxon>
        <taxon>Methanobacteriota</taxon>
        <taxon>Thermococci</taxon>
        <taxon>Thermococcales</taxon>
        <taxon>Thermococcaceae</taxon>
        <taxon>Pyrococcus</taxon>
    </lineage>
</organism>
<accession>Q9UZK3</accession>
<accession>G8ZKB6</accession>
<evidence type="ECO:0000255" key="1">
    <source>
        <dbReference type="HAMAP-Rule" id="MF_00188"/>
    </source>
</evidence>
<sequence length="289" mass="31696">MGLGLWIRTGVLMAFLTALLVGIGYLIGGRGGMIIAFTIALFMNLISYWFSDSIVLSWYNARIVSEEEAPELHYIVEKLARQAGIPKPKVAIVPTMVPNAFATGRGPGNAVVAVTEGLLHLLNRDELEGVIAHEISHIKNRDTLIQTLAAVLAGAIMILVDFARWSLWFGAYDDERDSGSVIGLILAIVLAPLAATLIQLAISRSREYLADETGARISGKPHALASALMKIEEAIRYRPLRRGNPATAHMFIVNPFRGVDFAELFSTHPPTEKRIERLRKIALEMGIVF</sequence>
<proteinExistence type="inferred from homology"/>